<keyword id="KW-1185">Reference proteome</keyword>
<proteinExistence type="inferred from homology"/>
<comment type="similarity">
    <text evidence="1">Belongs to the UPF0597 family.</text>
</comment>
<organism>
    <name type="scientific">Escherichia coli O1:K1 / APEC</name>
    <dbReference type="NCBI Taxonomy" id="405955"/>
    <lineage>
        <taxon>Bacteria</taxon>
        <taxon>Pseudomonadati</taxon>
        <taxon>Pseudomonadota</taxon>
        <taxon>Gammaproteobacteria</taxon>
        <taxon>Enterobacterales</taxon>
        <taxon>Enterobacteriaceae</taxon>
        <taxon>Escherichia</taxon>
    </lineage>
</organism>
<reference key="1">
    <citation type="journal article" date="2007" name="J. Bacteriol.">
        <title>The genome sequence of avian pathogenic Escherichia coli strain O1:K1:H7 shares strong similarities with human extraintestinal pathogenic E. coli genomes.</title>
        <authorList>
            <person name="Johnson T.J."/>
            <person name="Kariyawasam S."/>
            <person name="Wannemuehler Y."/>
            <person name="Mangiamele P."/>
            <person name="Johnson S.J."/>
            <person name="Doetkott C."/>
            <person name="Skyberg J.A."/>
            <person name="Lynne A.M."/>
            <person name="Johnson J.R."/>
            <person name="Nolan L.K."/>
        </authorList>
    </citation>
    <scope>NUCLEOTIDE SEQUENCE [LARGE SCALE GENOMIC DNA]</scope>
</reference>
<accession>A1AG22</accession>
<feature type="chain" id="PRO_0000339822" description="UPF0597 protein YhaM">
    <location>
        <begin position="1"/>
        <end position="436"/>
    </location>
</feature>
<name>YHAM_ECOK1</name>
<protein>
    <recommendedName>
        <fullName evidence="1">UPF0597 protein YhaM</fullName>
    </recommendedName>
</protein>
<sequence length="436" mass="45334">MFDSTLNPLWQRYILAVQEEVKPALGCTEPISLALAAAVAAAELEGPVERVEAWVSPNLMKNGLGVTVPGTGMVGLPIAAALGALGGNANAGLEVLKDATAQAISDAKALLAAGKVSVKIQEPCDEILFSRAKVWNGEKWACVTIVGGHTNIVHIETHNGVVFTQQACVTEGEQESPLTVLSRTTLAEILKFVNEVPFAAIRFILDSAKLNCALSQEGLSGNWGLHIGATLEKQCARGLLAKDLSSSIVIRTSAASDARMGGATLPAMSNSGSGNQGITATMPVVVVAEHFGADDERLARALMLSHLSAIYIHNQLPRLSALCAATTAAMGAAAGMAWLVDGRYETISMAISSMIGDVSGMICDGASNSCAMKVSTSASAAWKAVLMALDDTAVTGNEGIVAHDVEQSIANLCALASHSMQQTDRQIIEIMASKAR</sequence>
<dbReference type="EMBL" id="CP000468">
    <property type="protein sequence ID" value="ABJ02612.1"/>
    <property type="molecule type" value="Genomic_DNA"/>
</dbReference>
<dbReference type="KEGG" id="ecv:APECO1_3314"/>
<dbReference type="HOGENOM" id="CLU_051840_0_0_6"/>
<dbReference type="Proteomes" id="UP000008216">
    <property type="component" value="Chromosome"/>
</dbReference>
<dbReference type="GO" id="GO:0080146">
    <property type="term" value="F:L-cysteine desulfhydrase activity"/>
    <property type="evidence" value="ECO:0007669"/>
    <property type="project" value="TreeGrafter"/>
</dbReference>
<dbReference type="GO" id="GO:0019450">
    <property type="term" value="P:L-cysteine catabolic process to pyruvate"/>
    <property type="evidence" value="ECO:0007669"/>
    <property type="project" value="TreeGrafter"/>
</dbReference>
<dbReference type="HAMAP" id="MF_01845">
    <property type="entry name" value="UPF0597"/>
    <property type="match status" value="1"/>
</dbReference>
<dbReference type="InterPro" id="IPR005130">
    <property type="entry name" value="Ser_deHydtase-like_asu"/>
</dbReference>
<dbReference type="InterPro" id="IPR021144">
    <property type="entry name" value="UPF0597"/>
</dbReference>
<dbReference type="PANTHER" id="PTHR30501">
    <property type="entry name" value="UPF0597 PROTEIN YHAM"/>
    <property type="match status" value="1"/>
</dbReference>
<dbReference type="PANTHER" id="PTHR30501:SF2">
    <property type="entry name" value="UPF0597 PROTEIN YHAM"/>
    <property type="match status" value="1"/>
</dbReference>
<dbReference type="Pfam" id="PF03313">
    <property type="entry name" value="SDH_alpha"/>
    <property type="match status" value="1"/>
</dbReference>
<dbReference type="PIRSF" id="PIRSF006054">
    <property type="entry name" value="UCP006054"/>
    <property type="match status" value="1"/>
</dbReference>
<gene>
    <name evidence="1" type="primary">yhaM</name>
    <name type="ordered locus">Ecok1_31180</name>
    <name type="ORF">APECO1_3314</name>
</gene>
<evidence type="ECO:0000255" key="1">
    <source>
        <dbReference type="HAMAP-Rule" id="MF_01845"/>
    </source>
</evidence>